<accession>Q8DSY5</accession>
<organism>
    <name type="scientific">Streptococcus mutans serotype c (strain ATCC 700610 / UA159)</name>
    <dbReference type="NCBI Taxonomy" id="210007"/>
    <lineage>
        <taxon>Bacteria</taxon>
        <taxon>Bacillati</taxon>
        <taxon>Bacillota</taxon>
        <taxon>Bacilli</taxon>
        <taxon>Lactobacillales</taxon>
        <taxon>Streptococcaceae</taxon>
        <taxon>Streptococcus</taxon>
    </lineage>
</organism>
<dbReference type="EMBL" id="AE014133">
    <property type="protein sequence ID" value="AAN59262.1"/>
    <property type="molecule type" value="Genomic_DNA"/>
</dbReference>
<dbReference type="RefSeq" id="NP_721956.1">
    <property type="nucleotide sequence ID" value="NC_004350.2"/>
</dbReference>
<dbReference type="RefSeq" id="WP_002262769.1">
    <property type="nucleotide sequence ID" value="NC_004350.2"/>
</dbReference>
<dbReference type="SMR" id="Q8DSY5"/>
<dbReference type="STRING" id="210007.SMU_1621c"/>
<dbReference type="KEGG" id="smu:SMU_1621c"/>
<dbReference type="PATRIC" id="fig|210007.7.peg.1444"/>
<dbReference type="eggNOG" id="COG4479">
    <property type="taxonomic scope" value="Bacteria"/>
</dbReference>
<dbReference type="HOGENOM" id="CLU_177534_1_0_9"/>
<dbReference type="OrthoDB" id="2242851at2"/>
<dbReference type="PhylomeDB" id="Q8DSY5"/>
<dbReference type="Proteomes" id="UP000002512">
    <property type="component" value="Chromosome"/>
</dbReference>
<dbReference type="Gene3D" id="1.10.150.260">
    <property type="entry name" value="YozE SAM-like"/>
    <property type="match status" value="1"/>
</dbReference>
<dbReference type="HAMAP" id="MF_01538">
    <property type="entry name" value="UPF0346"/>
    <property type="match status" value="1"/>
</dbReference>
<dbReference type="InterPro" id="IPR010673">
    <property type="entry name" value="UPF0346"/>
</dbReference>
<dbReference type="InterPro" id="IPR023089">
    <property type="entry name" value="YozE_SAM-like"/>
</dbReference>
<dbReference type="InterPro" id="IPR036806">
    <property type="entry name" value="YozE_SAM-like_sf"/>
</dbReference>
<dbReference type="NCBIfam" id="NF010193">
    <property type="entry name" value="PRK13672.1"/>
    <property type="match status" value="1"/>
</dbReference>
<dbReference type="Pfam" id="PF06855">
    <property type="entry name" value="YozE_SAM_like"/>
    <property type="match status" value="1"/>
</dbReference>
<dbReference type="PIRSF" id="PIRSF037262">
    <property type="entry name" value="UCP037262"/>
    <property type="match status" value="1"/>
</dbReference>
<dbReference type="SUPFAM" id="SSF140652">
    <property type="entry name" value="YozE-like"/>
    <property type="match status" value="1"/>
</dbReference>
<name>Y1621_STRMU</name>
<protein>
    <recommendedName>
        <fullName evidence="1">UPF0346 protein SMU_1621c</fullName>
    </recommendedName>
</protein>
<evidence type="ECO:0000255" key="1">
    <source>
        <dbReference type="HAMAP-Rule" id="MF_01538"/>
    </source>
</evidence>
<feature type="chain" id="PRO_0000164293" description="UPF0346 protein SMU_1621c">
    <location>
        <begin position="1"/>
        <end position="71"/>
    </location>
</feature>
<comment type="similarity">
    <text evidence="1">Belongs to the UPF0346 family.</text>
</comment>
<reference key="1">
    <citation type="journal article" date="2002" name="Proc. Natl. Acad. Sci. U.S.A.">
        <title>Genome sequence of Streptococcus mutans UA159, a cariogenic dental pathogen.</title>
        <authorList>
            <person name="Ajdic D.J."/>
            <person name="McShan W.M."/>
            <person name="McLaughlin R.E."/>
            <person name="Savic G."/>
            <person name="Chang J."/>
            <person name="Carson M.B."/>
            <person name="Primeaux C."/>
            <person name="Tian R."/>
            <person name="Kenton S."/>
            <person name="Jia H.G."/>
            <person name="Lin S.P."/>
            <person name="Qian Y."/>
            <person name="Li S."/>
            <person name="Zhu H."/>
            <person name="Najar F.Z."/>
            <person name="Lai H."/>
            <person name="White J."/>
            <person name="Roe B.A."/>
            <person name="Ferretti J.J."/>
        </authorList>
    </citation>
    <scope>NUCLEOTIDE SEQUENCE [LARGE SCALE GENOMIC DNA]</scope>
    <source>
        <strain>ATCC 700610 / UA159</strain>
    </source>
</reference>
<gene>
    <name type="ordered locus">SMU_1621c</name>
</gene>
<keyword id="KW-1185">Reference proteome</keyword>
<proteinExistence type="inferred from homology"/>
<sequence>MRKSFYTWLMTQRHPKSHDPVAILADLVFEDTTFPKHTDSFERVSRYLEDEASFSFNLSEFDRIWEDYLAH</sequence>